<dbReference type="EMBL" id="CP000738">
    <property type="protein sequence ID" value="ABR59881.1"/>
    <property type="molecule type" value="Genomic_DNA"/>
</dbReference>
<dbReference type="RefSeq" id="WP_011975205.1">
    <property type="nucleotide sequence ID" value="NC_009636.1"/>
</dbReference>
<dbReference type="RefSeq" id="YP_001326716.1">
    <property type="nucleotide sequence ID" value="NC_009636.1"/>
</dbReference>
<dbReference type="SMR" id="A6U8A1"/>
<dbReference type="STRING" id="366394.Smed_1028"/>
<dbReference type="GeneID" id="61612188"/>
<dbReference type="KEGG" id="smd:Smed_1028"/>
<dbReference type="PATRIC" id="fig|366394.8.peg.4149"/>
<dbReference type="eggNOG" id="COG2718">
    <property type="taxonomic scope" value="Bacteria"/>
</dbReference>
<dbReference type="HOGENOM" id="CLU_049702_0_0_5"/>
<dbReference type="OrthoDB" id="9788289at2"/>
<dbReference type="Proteomes" id="UP000001108">
    <property type="component" value="Chromosome"/>
</dbReference>
<dbReference type="HAMAP" id="MF_01232">
    <property type="entry name" value="UPF0229"/>
    <property type="match status" value="1"/>
</dbReference>
<dbReference type="InterPro" id="IPR006698">
    <property type="entry name" value="UPF0229"/>
</dbReference>
<dbReference type="NCBIfam" id="NF003707">
    <property type="entry name" value="PRK05325.1-2"/>
    <property type="match status" value="1"/>
</dbReference>
<dbReference type="NCBIfam" id="NF003708">
    <property type="entry name" value="PRK05325.1-3"/>
    <property type="match status" value="1"/>
</dbReference>
<dbReference type="PANTHER" id="PTHR30510">
    <property type="entry name" value="UPF0229 PROTEIN YEAH"/>
    <property type="match status" value="1"/>
</dbReference>
<dbReference type="PANTHER" id="PTHR30510:SF2">
    <property type="entry name" value="UPF0229 PROTEIN YEAH"/>
    <property type="match status" value="1"/>
</dbReference>
<dbReference type="Pfam" id="PF04285">
    <property type="entry name" value="DUF444"/>
    <property type="match status" value="1"/>
</dbReference>
<proteinExistence type="inferred from homology"/>
<sequence>MPNFIDRRLNPKDKSLGNRQRFLKRAREELKRTIKERVKSGKIADVDAEQNVSMPARGVNEPAFQPDSNSGERRHVLPGNREFAAGDRIPKRGGGGGAGNAGAGTGQSEDEFQFVLSREEVLDLFFEDLELPDMVKLNLKESVTFKRRRAGFSASGSPTNINVGRTMRNSYGRRIALRRPSRREIEALADEIARLETEPGGRNKHRQRLEELRQTLDSLERRRRRIPYVDPVDIRFNRFEPQPLPNASAVMFCLMDVSASMGEREKDLAKRFFVLLHLFLKRRYERIDIVFIRHTDEAGEVDENTFFYSKQSGGTVVSTALEEMLRVIRERYPANEWNIYAAQASDGENISGDSERCASLLHDELMGLCQYYAYVEIIDERETEIFGTTDNGTSLWRAYRIVDGEWPNFQMTRIAKPADIYPVFRKLFGKQPEMQLRK</sequence>
<organism>
    <name type="scientific">Sinorhizobium medicae (strain WSM419)</name>
    <name type="common">Ensifer medicae</name>
    <dbReference type="NCBI Taxonomy" id="366394"/>
    <lineage>
        <taxon>Bacteria</taxon>
        <taxon>Pseudomonadati</taxon>
        <taxon>Pseudomonadota</taxon>
        <taxon>Alphaproteobacteria</taxon>
        <taxon>Hyphomicrobiales</taxon>
        <taxon>Rhizobiaceae</taxon>
        <taxon>Sinorhizobium/Ensifer group</taxon>
        <taxon>Sinorhizobium</taxon>
    </lineage>
</organism>
<reference key="1">
    <citation type="submission" date="2007-06" db="EMBL/GenBank/DDBJ databases">
        <title>Complete sequence of Sinorhizobium medicae WSM419 chromosome.</title>
        <authorList>
            <consortium name="US DOE Joint Genome Institute"/>
            <person name="Copeland A."/>
            <person name="Lucas S."/>
            <person name="Lapidus A."/>
            <person name="Barry K."/>
            <person name="Glavina del Rio T."/>
            <person name="Dalin E."/>
            <person name="Tice H."/>
            <person name="Pitluck S."/>
            <person name="Chain P."/>
            <person name="Malfatti S."/>
            <person name="Shin M."/>
            <person name="Vergez L."/>
            <person name="Schmutz J."/>
            <person name="Larimer F."/>
            <person name="Land M."/>
            <person name="Hauser L."/>
            <person name="Kyrpides N."/>
            <person name="Mikhailova N."/>
            <person name="Reeve W.G."/>
            <person name="Richardson P."/>
        </authorList>
    </citation>
    <scope>NUCLEOTIDE SEQUENCE [LARGE SCALE GENOMIC DNA]</scope>
    <source>
        <strain>WSM419</strain>
    </source>
</reference>
<name>Y1028_SINMW</name>
<gene>
    <name type="ordered locus">Smed_1028</name>
</gene>
<feature type="chain" id="PRO_1000066883" description="UPF0229 protein Smed_1028">
    <location>
        <begin position="1"/>
        <end position="438"/>
    </location>
</feature>
<feature type="region of interest" description="Disordered" evidence="2">
    <location>
        <begin position="55"/>
        <end position="107"/>
    </location>
</feature>
<feature type="compositionally biased region" description="Gly residues" evidence="2">
    <location>
        <begin position="92"/>
        <end position="105"/>
    </location>
</feature>
<evidence type="ECO:0000255" key="1">
    <source>
        <dbReference type="HAMAP-Rule" id="MF_01232"/>
    </source>
</evidence>
<evidence type="ECO:0000256" key="2">
    <source>
        <dbReference type="SAM" id="MobiDB-lite"/>
    </source>
</evidence>
<accession>A6U8A1</accession>
<protein>
    <recommendedName>
        <fullName evidence="1">UPF0229 protein Smed_1028</fullName>
    </recommendedName>
</protein>
<comment type="similarity">
    <text evidence="1">Belongs to the UPF0229 family.</text>
</comment>